<accession>P0A535</accession>
<accession>A0A1R3Y330</accession>
<accession>P95230</accession>
<accession>X2BKC8</accession>
<dbReference type="EC" id="2.5.1.47"/>
<dbReference type="EMBL" id="LT708304">
    <property type="protein sequence ID" value="SIU00974.1"/>
    <property type="molecule type" value="Genomic_DNA"/>
</dbReference>
<dbReference type="RefSeq" id="NP_856011.1">
    <property type="nucleotide sequence ID" value="NC_002945.3"/>
</dbReference>
<dbReference type="RefSeq" id="WP_003899275.1">
    <property type="nucleotide sequence ID" value="NC_002945.4"/>
</dbReference>
<dbReference type="SMR" id="P0A535"/>
<dbReference type="GeneID" id="45426318"/>
<dbReference type="KEGG" id="mbo:BQ2027_MB2362"/>
<dbReference type="PATRIC" id="fig|233413.5.peg.2592"/>
<dbReference type="UniPathway" id="UPA00136">
    <property type="reaction ID" value="UER00200"/>
</dbReference>
<dbReference type="Proteomes" id="UP000001419">
    <property type="component" value="Chromosome"/>
</dbReference>
<dbReference type="GO" id="GO:0004124">
    <property type="term" value="F:cysteine synthase activity"/>
    <property type="evidence" value="ECO:0007669"/>
    <property type="project" value="UniProtKB-EC"/>
</dbReference>
<dbReference type="GO" id="GO:0006535">
    <property type="term" value="P:cysteine biosynthetic process from serine"/>
    <property type="evidence" value="ECO:0007669"/>
    <property type="project" value="InterPro"/>
</dbReference>
<dbReference type="CDD" id="cd01561">
    <property type="entry name" value="CBS_like"/>
    <property type="match status" value="1"/>
</dbReference>
<dbReference type="FunFam" id="3.40.50.1100:FF:000067">
    <property type="entry name" value="Cysteine synthase"/>
    <property type="match status" value="1"/>
</dbReference>
<dbReference type="Gene3D" id="3.40.50.1100">
    <property type="match status" value="2"/>
</dbReference>
<dbReference type="InterPro" id="IPR005856">
    <property type="entry name" value="Cys_synth"/>
</dbReference>
<dbReference type="InterPro" id="IPR050214">
    <property type="entry name" value="Cys_Synth/Cystath_Beta-Synth"/>
</dbReference>
<dbReference type="InterPro" id="IPR005859">
    <property type="entry name" value="CysK"/>
</dbReference>
<dbReference type="InterPro" id="IPR001216">
    <property type="entry name" value="P-phosphate_BS"/>
</dbReference>
<dbReference type="InterPro" id="IPR001926">
    <property type="entry name" value="TrpB-like_PALP"/>
</dbReference>
<dbReference type="InterPro" id="IPR036052">
    <property type="entry name" value="TrpB-like_PALP_sf"/>
</dbReference>
<dbReference type="NCBIfam" id="TIGR01139">
    <property type="entry name" value="cysK"/>
    <property type="match status" value="1"/>
</dbReference>
<dbReference type="NCBIfam" id="TIGR01136">
    <property type="entry name" value="cysKM"/>
    <property type="match status" value="1"/>
</dbReference>
<dbReference type="PANTHER" id="PTHR10314">
    <property type="entry name" value="CYSTATHIONINE BETA-SYNTHASE"/>
    <property type="match status" value="1"/>
</dbReference>
<dbReference type="Pfam" id="PF00291">
    <property type="entry name" value="PALP"/>
    <property type="match status" value="1"/>
</dbReference>
<dbReference type="SUPFAM" id="SSF53686">
    <property type="entry name" value="Tryptophan synthase beta subunit-like PLP-dependent enzymes"/>
    <property type="match status" value="1"/>
</dbReference>
<dbReference type="PROSITE" id="PS00901">
    <property type="entry name" value="CYS_SYNTHASE"/>
    <property type="match status" value="1"/>
</dbReference>
<sequence>MSIAEDITQLIGRTPLVRLRRVTDGAVADIVAKLEFFNPANSVKDRIGVAMLQAAEQAGLIKPDTIILEPTSGNTGIALAMVCAARGYRCVLTMPETMSLERRMLLRAYGAELILTPGADGMSGAIAKAEELAKTDQRYFVPQQFENPANPAIHRVTTAEEVWRDTDGKVDIVVAGVGTGGTITGVAQVIKERKPSARFVAVEPAASPVLSGGQKGPHPIQGIGAGFVPPVLDQDLVDEIITVGNEDALNVARRLAREEGLLVGISSGAATVAALQVARRPENAGKLIVVVLPDFGERYLSTPLFADVAD</sequence>
<reference key="1">
    <citation type="journal article" date="2003" name="Proc. Natl. Acad. Sci. U.S.A.">
        <title>The complete genome sequence of Mycobacterium bovis.</title>
        <authorList>
            <person name="Garnier T."/>
            <person name="Eiglmeier K."/>
            <person name="Camus J.-C."/>
            <person name="Medina N."/>
            <person name="Mansoor H."/>
            <person name="Pryor M."/>
            <person name="Duthoy S."/>
            <person name="Grondin S."/>
            <person name="Lacroix C."/>
            <person name="Monsempe C."/>
            <person name="Simon S."/>
            <person name="Harris B."/>
            <person name="Atkin R."/>
            <person name="Doggett J."/>
            <person name="Mayes R."/>
            <person name="Keating L."/>
            <person name="Wheeler P.R."/>
            <person name="Parkhill J."/>
            <person name="Barrell B.G."/>
            <person name="Cole S.T."/>
            <person name="Gordon S.V."/>
            <person name="Hewinson R.G."/>
        </authorList>
    </citation>
    <scope>NUCLEOTIDE SEQUENCE [LARGE SCALE GENOMIC DNA]</scope>
    <source>
        <strain>ATCC BAA-935 / AF2122/97</strain>
    </source>
</reference>
<reference key="2">
    <citation type="journal article" date="2017" name="Genome Announc.">
        <title>Updated reference genome sequence and annotation of Mycobacterium bovis AF2122/97.</title>
        <authorList>
            <person name="Malone K.M."/>
            <person name="Farrell D."/>
            <person name="Stuber T.P."/>
            <person name="Schubert O.T."/>
            <person name="Aebersold R."/>
            <person name="Robbe-Austerman S."/>
            <person name="Gordon S.V."/>
        </authorList>
    </citation>
    <scope>NUCLEOTIDE SEQUENCE [LARGE SCALE GENOMIC DNA]</scope>
    <scope>GENOME REANNOTATION</scope>
    <source>
        <strain>ATCC BAA-935 / AF2122/97</strain>
    </source>
</reference>
<gene>
    <name type="primary">cysK</name>
    <name type="ordered locus">BQ2027_MB2362</name>
</gene>
<keyword id="KW-0028">Amino-acid biosynthesis</keyword>
<keyword id="KW-0198">Cysteine biosynthesis</keyword>
<keyword id="KW-0663">Pyridoxal phosphate</keyword>
<keyword id="KW-1185">Reference proteome</keyword>
<keyword id="KW-0808">Transferase</keyword>
<organism>
    <name type="scientific">Mycobacterium bovis (strain ATCC BAA-935 / AF2122/97)</name>
    <dbReference type="NCBI Taxonomy" id="233413"/>
    <lineage>
        <taxon>Bacteria</taxon>
        <taxon>Bacillati</taxon>
        <taxon>Actinomycetota</taxon>
        <taxon>Actinomycetes</taxon>
        <taxon>Mycobacteriales</taxon>
        <taxon>Mycobacteriaceae</taxon>
        <taxon>Mycobacterium</taxon>
        <taxon>Mycobacterium tuberculosis complex</taxon>
    </lineage>
</organism>
<feature type="chain" id="PRO_0000167092" description="O-acetylserine sulfhydrylase">
    <location>
        <begin position="1"/>
        <end position="310"/>
    </location>
</feature>
<feature type="binding site" evidence="1">
    <location>
        <position position="74"/>
    </location>
    <ligand>
        <name>pyridoxal 5'-phosphate</name>
        <dbReference type="ChEBI" id="CHEBI:597326"/>
    </ligand>
</feature>
<feature type="binding site" evidence="1">
    <location>
        <begin position="178"/>
        <end position="182"/>
    </location>
    <ligand>
        <name>pyridoxal 5'-phosphate</name>
        <dbReference type="ChEBI" id="CHEBI:597326"/>
    </ligand>
</feature>
<feature type="binding site" evidence="1">
    <location>
        <position position="266"/>
    </location>
    <ligand>
        <name>pyridoxal 5'-phosphate</name>
        <dbReference type="ChEBI" id="CHEBI:597326"/>
    </ligand>
</feature>
<feature type="modified residue" description="N6-(pyridoxal phosphate)lysine" evidence="1">
    <location>
        <position position="44"/>
    </location>
</feature>
<evidence type="ECO:0000250" key="1"/>
<evidence type="ECO:0000305" key="2"/>
<name>CYSK_MYCBO</name>
<protein>
    <recommendedName>
        <fullName>O-acetylserine sulfhydrylase</fullName>
        <shortName>OAS sulfhydrylase</shortName>
        <shortName>OASS</shortName>
        <ecNumber>2.5.1.47</ecNumber>
    </recommendedName>
    <alternativeName>
        <fullName>Cysteine synthase A</fullName>
        <shortName>CSase A</shortName>
    </alternativeName>
    <alternativeName>
        <fullName>O-acetylserine (thiol)-lyase A</fullName>
        <shortName>OAS-TL A</shortName>
    </alternativeName>
    <alternativeName>
        <fullName>O-acetylserine-specific cysteine synthase</fullName>
    </alternativeName>
    <alternativeName>
        <fullName>Sulfide-dependent cysteine synthase</fullName>
    </alternativeName>
</protein>
<proteinExistence type="inferred from homology"/>
<comment type="function">
    <text evidence="1">Catalyzes the conversion of O-acetylserine (OAS) to cysteine through the elimination of acetate and addition of hydrogen sulfide.</text>
</comment>
<comment type="catalytic activity">
    <reaction>
        <text>O-acetyl-L-serine + hydrogen sulfide = L-cysteine + acetate</text>
        <dbReference type="Rhea" id="RHEA:14829"/>
        <dbReference type="ChEBI" id="CHEBI:29919"/>
        <dbReference type="ChEBI" id="CHEBI:30089"/>
        <dbReference type="ChEBI" id="CHEBI:35235"/>
        <dbReference type="ChEBI" id="CHEBI:58340"/>
        <dbReference type="EC" id="2.5.1.47"/>
    </reaction>
</comment>
<comment type="cofactor">
    <cofactor evidence="1">
        <name>pyridoxal 5'-phosphate</name>
        <dbReference type="ChEBI" id="CHEBI:597326"/>
    </cofactor>
</comment>
<comment type="pathway">
    <text>Amino-acid biosynthesis; L-cysteine biosynthesis; L-cysteine from L-serine: step 2/2.</text>
</comment>
<comment type="subunit">
    <text evidence="1">Homodimer.</text>
</comment>
<comment type="similarity">
    <text evidence="2">Belongs to the cysteine synthase/cystathionine beta-synthase family.</text>
</comment>